<organism>
    <name type="scientific">Geobacillus thermodenitrificans (strain NG80-2)</name>
    <dbReference type="NCBI Taxonomy" id="420246"/>
    <lineage>
        <taxon>Bacteria</taxon>
        <taxon>Bacillati</taxon>
        <taxon>Bacillota</taxon>
        <taxon>Bacilli</taxon>
        <taxon>Bacillales</taxon>
        <taxon>Anoxybacillaceae</taxon>
        <taxon>Geobacillus</taxon>
    </lineage>
</organism>
<evidence type="ECO:0000255" key="1">
    <source>
        <dbReference type="HAMAP-Rule" id="MF_00444"/>
    </source>
</evidence>
<proteinExistence type="inferred from homology"/>
<reference key="1">
    <citation type="journal article" date="2007" name="Proc. Natl. Acad. Sci. U.S.A.">
        <title>Genome and proteome of long-chain alkane degrading Geobacillus thermodenitrificans NG80-2 isolated from a deep-subsurface oil reservoir.</title>
        <authorList>
            <person name="Feng L."/>
            <person name="Wang W."/>
            <person name="Cheng J."/>
            <person name="Ren Y."/>
            <person name="Zhao G."/>
            <person name="Gao C."/>
            <person name="Tang Y."/>
            <person name="Liu X."/>
            <person name="Han W."/>
            <person name="Peng X."/>
            <person name="Liu R."/>
            <person name="Wang L."/>
        </authorList>
    </citation>
    <scope>NUCLEOTIDE SEQUENCE [LARGE SCALE GENOMIC DNA]</scope>
    <source>
        <strain>NG80-2</strain>
    </source>
</reference>
<gene>
    <name evidence="1" type="primary">clpP</name>
    <name type="ordered locus">GTNG_3011</name>
</gene>
<keyword id="KW-0963">Cytoplasm</keyword>
<keyword id="KW-0378">Hydrolase</keyword>
<keyword id="KW-0645">Protease</keyword>
<keyword id="KW-0720">Serine protease</keyword>
<name>CLPP_GEOTN</name>
<comment type="function">
    <text evidence="1">Cleaves peptides in various proteins in a process that requires ATP hydrolysis. Has a chymotrypsin-like activity. Plays a major role in the degradation of misfolded proteins.</text>
</comment>
<comment type="catalytic activity">
    <reaction evidence="1">
        <text>Hydrolysis of proteins to small peptides in the presence of ATP and magnesium. alpha-casein is the usual test substrate. In the absence of ATP, only oligopeptides shorter than five residues are hydrolyzed (such as succinyl-Leu-Tyr-|-NHMec, and Leu-Tyr-Leu-|-Tyr-Trp, in which cleavage of the -Tyr-|-Leu- and -Tyr-|-Trp bonds also occurs).</text>
        <dbReference type="EC" id="3.4.21.92"/>
    </reaction>
</comment>
<comment type="subunit">
    <text evidence="1">Fourteen ClpP subunits assemble into 2 heptameric rings which stack back to back to give a disk-like structure with a central cavity, resembling the structure of eukaryotic proteasomes.</text>
</comment>
<comment type="subcellular location">
    <subcellularLocation>
        <location evidence="1">Cytoplasm</location>
    </subcellularLocation>
</comment>
<comment type="similarity">
    <text evidence="1">Belongs to the peptidase S14 family.</text>
</comment>
<sequence>MYLIPTVIEQTNRGERAYDIYSRLLKDRIIFLGSPIDDQVANSIVSQLLFLAAEDPEKDISLYINSPGGSITAGLAIYDTMQFIKPDVSTICIGMAASMGAFLLAAGAKGKRFALPNSEVMIHQPLGGAQGQATEIEIAAKRILFLRDKLNRILAENTGQPIEVIERDTDRDNFMTAQKAQEYGIIDRVLTRLEDK</sequence>
<feature type="chain" id="PRO_1000026096" description="ATP-dependent Clp protease proteolytic subunit">
    <location>
        <begin position="1"/>
        <end position="196"/>
    </location>
</feature>
<feature type="active site" description="Nucleophile" evidence="1">
    <location>
        <position position="98"/>
    </location>
</feature>
<feature type="active site" evidence="1">
    <location>
        <position position="123"/>
    </location>
</feature>
<accession>A4ISQ2</accession>
<protein>
    <recommendedName>
        <fullName evidence="1">ATP-dependent Clp protease proteolytic subunit</fullName>
        <ecNumber evidence="1">3.4.21.92</ecNumber>
    </recommendedName>
    <alternativeName>
        <fullName evidence="1">Endopeptidase Clp</fullName>
    </alternativeName>
</protein>
<dbReference type="EC" id="3.4.21.92" evidence="1"/>
<dbReference type="EMBL" id="CP000557">
    <property type="protein sequence ID" value="ABO68356.1"/>
    <property type="molecule type" value="Genomic_DNA"/>
</dbReference>
<dbReference type="RefSeq" id="WP_008880295.1">
    <property type="nucleotide sequence ID" value="NC_009328.1"/>
</dbReference>
<dbReference type="SMR" id="A4ISQ2"/>
<dbReference type="MEROPS" id="S14.001"/>
<dbReference type="GeneID" id="87622839"/>
<dbReference type="KEGG" id="gtn:GTNG_3011"/>
<dbReference type="eggNOG" id="COG0740">
    <property type="taxonomic scope" value="Bacteria"/>
</dbReference>
<dbReference type="HOGENOM" id="CLU_058707_3_2_9"/>
<dbReference type="Proteomes" id="UP000001578">
    <property type="component" value="Chromosome"/>
</dbReference>
<dbReference type="GO" id="GO:0005737">
    <property type="term" value="C:cytoplasm"/>
    <property type="evidence" value="ECO:0007669"/>
    <property type="project" value="UniProtKB-SubCell"/>
</dbReference>
<dbReference type="GO" id="GO:0009368">
    <property type="term" value="C:endopeptidase Clp complex"/>
    <property type="evidence" value="ECO:0007669"/>
    <property type="project" value="TreeGrafter"/>
</dbReference>
<dbReference type="GO" id="GO:0004176">
    <property type="term" value="F:ATP-dependent peptidase activity"/>
    <property type="evidence" value="ECO:0007669"/>
    <property type="project" value="InterPro"/>
</dbReference>
<dbReference type="GO" id="GO:0051117">
    <property type="term" value="F:ATPase binding"/>
    <property type="evidence" value="ECO:0007669"/>
    <property type="project" value="TreeGrafter"/>
</dbReference>
<dbReference type="GO" id="GO:0004252">
    <property type="term" value="F:serine-type endopeptidase activity"/>
    <property type="evidence" value="ECO:0007669"/>
    <property type="project" value="UniProtKB-UniRule"/>
</dbReference>
<dbReference type="GO" id="GO:0006515">
    <property type="term" value="P:protein quality control for misfolded or incompletely synthesized proteins"/>
    <property type="evidence" value="ECO:0007669"/>
    <property type="project" value="TreeGrafter"/>
</dbReference>
<dbReference type="CDD" id="cd07017">
    <property type="entry name" value="S14_ClpP_2"/>
    <property type="match status" value="1"/>
</dbReference>
<dbReference type="FunFam" id="3.90.226.10:FF:000001">
    <property type="entry name" value="ATP-dependent Clp protease proteolytic subunit"/>
    <property type="match status" value="1"/>
</dbReference>
<dbReference type="Gene3D" id="3.90.226.10">
    <property type="entry name" value="2-enoyl-CoA Hydratase, Chain A, domain 1"/>
    <property type="match status" value="1"/>
</dbReference>
<dbReference type="HAMAP" id="MF_00444">
    <property type="entry name" value="ClpP"/>
    <property type="match status" value="1"/>
</dbReference>
<dbReference type="InterPro" id="IPR001907">
    <property type="entry name" value="ClpP"/>
</dbReference>
<dbReference type="InterPro" id="IPR029045">
    <property type="entry name" value="ClpP/crotonase-like_dom_sf"/>
</dbReference>
<dbReference type="InterPro" id="IPR023562">
    <property type="entry name" value="ClpP/TepA"/>
</dbReference>
<dbReference type="InterPro" id="IPR033135">
    <property type="entry name" value="ClpP_His_AS"/>
</dbReference>
<dbReference type="InterPro" id="IPR018215">
    <property type="entry name" value="ClpP_Ser_AS"/>
</dbReference>
<dbReference type="NCBIfam" id="TIGR00493">
    <property type="entry name" value="clpP"/>
    <property type="match status" value="1"/>
</dbReference>
<dbReference type="NCBIfam" id="NF001368">
    <property type="entry name" value="PRK00277.1"/>
    <property type="match status" value="1"/>
</dbReference>
<dbReference type="NCBIfam" id="NF009205">
    <property type="entry name" value="PRK12553.1"/>
    <property type="match status" value="1"/>
</dbReference>
<dbReference type="PANTHER" id="PTHR10381">
    <property type="entry name" value="ATP-DEPENDENT CLP PROTEASE PROTEOLYTIC SUBUNIT"/>
    <property type="match status" value="1"/>
</dbReference>
<dbReference type="PANTHER" id="PTHR10381:SF70">
    <property type="entry name" value="ATP-DEPENDENT CLP PROTEASE PROTEOLYTIC SUBUNIT"/>
    <property type="match status" value="1"/>
</dbReference>
<dbReference type="Pfam" id="PF00574">
    <property type="entry name" value="CLP_protease"/>
    <property type="match status" value="1"/>
</dbReference>
<dbReference type="PRINTS" id="PR00127">
    <property type="entry name" value="CLPPROTEASEP"/>
</dbReference>
<dbReference type="SUPFAM" id="SSF52096">
    <property type="entry name" value="ClpP/crotonase"/>
    <property type="match status" value="1"/>
</dbReference>
<dbReference type="PROSITE" id="PS00382">
    <property type="entry name" value="CLP_PROTEASE_HIS"/>
    <property type="match status" value="1"/>
</dbReference>
<dbReference type="PROSITE" id="PS00381">
    <property type="entry name" value="CLP_PROTEASE_SER"/>
    <property type="match status" value="1"/>
</dbReference>